<feature type="chain" id="PRO_1000143794" description="Large ribosomal subunit protein bL21">
    <location>
        <begin position="1"/>
        <end position="103"/>
    </location>
</feature>
<evidence type="ECO:0000255" key="1">
    <source>
        <dbReference type="HAMAP-Rule" id="MF_01363"/>
    </source>
</evidence>
<evidence type="ECO:0000305" key="2"/>
<comment type="function">
    <text evidence="1">This protein binds to 23S rRNA in the presence of protein L20.</text>
</comment>
<comment type="subunit">
    <text evidence="1">Part of the 50S ribosomal subunit. Contacts protein L20.</text>
</comment>
<comment type="similarity">
    <text evidence="1">Belongs to the bacterial ribosomal protein bL21 family.</text>
</comment>
<proteinExistence type="inferred from homology"/>
<name>RL21_ECOSE</name>
<reference key="1">
    <citation type="journal article" date="2008" name="DNA Res.">
        <title>Complete genome sequence and comparative analysis of the wild-type commensal Escherichia coli strain SE11 isolated from a healthy adult.</title>
        <authorList>
            <person name="Oshima K."/>
            <person name="Toh H."/>
            <person name="Ogura Y."/>
            <person name="Sasamoto H."/>
            <person name="Morita H."/>
            <person name="Park S.-H."/>
            <person name="Ooka T."/>
            <person name="Iyoda S."/>
            <person name="Taylor T.D."/>
            <person name="Hayashi T."/>
            <person name="Itoh K."/>
            <person name="Hattori M."/>
        </authorList>
    </citation>
    <scope>NUCLEOTIDE SEQUENCE [LARGE SCALE GENOMIC DNA]</scope>
    <source>
        <strain>SE11</strain>
    </source>
</reference>
<gene>
    <name evidence="1" type="primary">rplU</name>
    <name type="ordered locus">ECSE_3470</name>
</gene>
<keyword id="KW-0687">Ribonucleoprotein</keyword>
<keyword id="KW-0689">Ribosomal protein</keyword>
<keyword id="KW-0694">RNA-binding</keyword>
<keyword id="KW-0699">rRNA-binding</keyword>
<protein>
    <recommendedName>
        <fullName evidence="1">Large ribosomal subunit protein bL21</fullName>
    </recommendedName>
    <alternativeName>
        <fullName evidence="2">50S ribosomal protein L21</fullName>
    </alternativeName>
</protein>
<sequence>MYAVFQSGGKQHRVSEGQTVRLEKLDIATGETVEFAEVLMIANGEEVKIGVPFVDGGVIKAEVVAHGRGEKVKIVKFRRRKHYRKQQGHRQWFTDVKITGISA</sequence>
<accession>B6I1Q9</accession>
<organism>
    <name type="scientific">Escherichia coli (strain SE11)</name>
    <dbReference type="NCBI Taxonomy" id="409438"/>
    <lineage>
        <taxon>Bacteria</taxon>
        <taxon>Pseudomonadati</taxon>
        <taxon>Pseudomonadota</taxon>
        <taxon>Gammaproteobacteria</taxon>
        <taxon>Enterobacterales</taxon>
        <taxon>Enterobacteriaceae</taxon>
        <taxon>Escherichia</taxon>
    </lineage>
</organism>
<dbReference type="EMBL" id="AP009240">
    <property type="protein sequence ID" value="BAG78994.1"/>
    <property type="molecule type" value="Genomic_DNA"/>
</dbReference>
<dbReference type="RefSeq" id="WP_000271401.1">
    <property type="nucleotide sequence ID" value="NC_011415.1"/>
</dbReference>
<dbReference type="SMR" id="B6I1Q9"/>
<dbReference type="GeneID" id="93778795"/>
<dbReference type="KEGG" id="ecy:ECSE_3470"/>
<dbReference type="HOGENOM" id="CLU_061463_3_3_6"/>
<dbReference type="Proteomes" id="UP000008199">
    <property type="component" value="Chromosome"/>
</dbReference>
<dbReference type="GO" id="GO:0005737">
    <property type="term" value="C:cytoplasm"/>
    <property type="evidence" value="ECO:0007669"/>
    <property type="project" value="UniProtKB-ARBA"/>
</dbReference>
<dbReference type="GO" id="GO:1990904">
    <property type="term" value="C:ribonucleoprotein complex"/>
    <property type="evidence" value="ECO:0007669"/>
    <property type="project" value="UniProtKB-KW"/>
</dbReference>
<dbReference type="GO" id="GO:0005840">
    <property type="term" value="C:ribosome"/>
    <property type="evidence" value="ECO:0007669"/>
    <property type="project" value="UniProtKB-KW"/>
</dbReference>
<dbReference type="GO" id="GO:0019843">
    <property type="term" value="F:rRNA binding"/>
    <property type="evidence" value="ECO:0007669"/>
    <property type="project" value="UniProtKB-UniRule"/>
</dbReference>
<dbReference type="GO" id="GO:0003735">
    <property type="term" value="F:structural constituent of ribosome"/>
    <property type="evidence" value="ECO:0007669"/>
    <property type="project" value="InterPro"/>
</dbReference>
<dbReference type="GO" id="GO:0006412">
    <property type="term" value="P:translation"/>
    <property type="evidence" value="ECO:0007669"/>
    <property type="project" value="UniProtKB-UniRule"/>
</dbReference>
<dbReference type="HAMAP" id="MF_01363">
    <property type="entry name" value="Ribosomal_bL21"/>
    <property type="match status" value="1"/>
</dbReference>
<dbReference type="InterPro" id="IPR028909">
    <property type="entry name" value="bL21-like"/>
</dbReference>
<dbReference type="InterPro" id="IPR036164">
    <property type="entry name" value="bL21-like_sf"/>
</dbReference>
<dbReference type="InterPro" id="IPR001787">
    <property type="entry name" value="Ribosomal_bL21"/>
</dbReference>
<dbReference type="InterPro" id="IPR018258">
    <property type="entry name" value="Ribosomal_bL21_CS"/>
</dbReference>
<dbReference type="NCBIfam" id="TIGR00061">
    <property type="entry name" value="L21"/>
    <property type="match status" value="1"/>
</dbReference>
<dbReference type="PANTHER" id="PTHR21349">
    <property type="entry name" value="50S RIBOSOMAL PROTEIN L21"/>
    <property type="match status" value="1"/>
</dbReference>
<dbReference type="PANTHER" id="PTHR21349:SF0">
    <property type="entry name" value="LARGE RIBOSOMAL SUBUNIT PROTEIN BL21M"/>
    <property type="match status" value="1"/>
</dbReference>
<dbReference type="Pfam" id="PF00829">
    <property type="entry name" value="Ribosomal_L21p"/>
    <property type="match status" value="1"/>
</dbReference>
<dbReference type="SUPFAM" id="SSF141091">
    <property type="entry name" value="L21p-like"/>
    <property type="match status" value="1"/>
</dbReference>
<dbReference type="PROSITE" id="PS01169">
    <property type="entry name" value="RIBOSOMAL_L21"/>
    <property type="match status" value="1"/>
</dbReference>